<protein>
    <recommendedName>
        <fullName evidence="1">Putative membrane protein insertion efficiency factor</fullName>
    </recommendedName>
</protein>
<dbReference type="EMBL" id="CP000267">
    <property type="protein sequence ID" value="ABD71930.1"/>
    <property type="molecule type" value="Genomic_DNA"/>
</dbReference>
<dbReference type="RefSeq" id="WP_011466487.1">
    <property type="nucleotide sequence ID" value="NC_007908.1"/>
</dbReference>
<dbReference type="STRING" id="338969.Rfer_4243"/>
<dbReference type="KEGG" id="rfr:Rfer_4243"/>
<dbReference type="eggNOG" id="COG0759">
    <property type="taxonomic scope" value="Bacteria"/>
</dbReference>
<dbReference type="HOGENOM" id="CLU_144811_2_0_4"/>
<dbReference type="OrthoDB" id="9801753at2"/>
<dbReference type="Proteomes" id="UP000008332">
    <property type="component" value="Chromosome"/>
</dbReference>
<dbReference type="GO" id="GO:0005886">
    <property type="term" value="C:plasma membrane"/>
    <property type="evidence" value="ECO:0007669"/>
    <property type="project" value="UniProtKB-SubCell"/>
</dbReference>
<dbReference type="HAMAP" id="MF_00386">
    <property type="entry name" value="UPF0161_YidD"/>
    <property type="match status" value="1"/>
</dbReference>
<dbReference type="InterPro" id="IPR002696">
    <property type="entry name" value="Membr_insert_effic_factor_YidD"/>
</dbReference>
<dbReference type="NCBIfam" id="TIGR00278">
    <property type="entry name" value="membrane protein insertion efficiency factor YidD"/>
    <property type="match status" value="1"/>
</dbReference>
<dbReference type="PANTHER" id="PTHR33383">
    <property type="entry name" value="MEMBRANE PROTEIN INSERTION EFFICIENCY FACTOR-RELATED"/>
    <property type="match status" value="1"/>
</dbReference>
<dbReference type="PANTHER" id="PTHR33383:SF1">
    <property type="entry name" value="MEMBRANE PROTEIN INSERTION EFFICIENCY FACTOR-RELATED"/>
    <property type="match status" value="1"/>
</dbReference>
<dbReference type="Pfam" id="PF01809">
    <property type="entry name" value="YidD"/>
    <property type="match status" value="1"/>
</dbReference>
<dbReference type="SMART" id="SM01234">
    <property type="entry name" value="Haemolytic"/>
    <property type="match status" value="1"/>
</dbReference>
<organism>
    <name type="scientific">Albidiferax ferrireducens (strain ATCC BAA-621 / DSM 15236 / T118)</name>
    <name type="common">Rhodoferax ferrireducens</name>
    <dbReference type="NCBI Taxonomy" id="338969"/>
    <lineage>
        <taxon>Bacteria</taxon>
        <taxon>Pseudomonadati</taxon>
        <taxon>Pseudomonadota</taxon>
        <taxon>Betaproteobacteria</taxon>
        <taxon>Burkholderiales</taxon>
        <taxon>Comamonadaceae</taxon>
        <taxon>Rhodoferax</taxon>
    </lineage>
</organism>
<accession>Q21QM3</accession>
<comment type="function">
    <text evidence="1">Could be involved in insertion of integral membrane proteins into the membrane.</text>
</comment>
<comment type="subcellular location">
    <subcellularLocation>
        <location evidence="1">Cell inner membrane</location>
        <topology evidence="1">Peripheral membrane protein</topology>
        <orientation evidence="1">Cytoplasmic side</orientation>
    </subcellularLocation>
</comment>
<comment type="similarity">
    <text evidence="1">Belongs to the UPF0161 family.</text>
</comment>
<evidence type="ECO:0000255" key="1">
    <source>
        <dbReference type="HAMAP-Rule" id="MF_00386"/>
    </source>
</evidence>
<proteinExistence type="inferred from homology"/>
<keyword id="KW-0997">Cell inner membrane</keyword>
<keyword id="KW-1003">Cell membrane</keyword>
<keyword id="KW-0472">Membrane</keyword>
<keyword id="KW-1185">Reference proteome</keyword>
<feature type="chain" id="PRO_0000253154" description="Putative membrane protein insertion efficiency factor">
    <location>
        <begin position="1"/>
        <end position="94"/>
    </location>
</feature>
<gene>
    <name type="ordered locus">Rfer_4243</name>
</gene>
<reference key="1">
    <citation type="submission" date="2006-02" db="EMBL/GenBank/DDBJ databases">
        <title>Complete sequence of chromosome of Rhodoferax ferrireducens DSM 15236.</title>
        <authorList>
            <person name="Copeland A."/>
            <person name="Lucas S."/>
            <person name="Lapidus A."/>
            <person name="Barry K."/>
            <person name="Detter J.C."/>
            <person name="Glavina del Rio T."/>
            <person name="Hammon N."/>
            <person name="Israni S."/>
            <person name="Pitluck S."/>
            <person name="Brettin T."/>
            <person name="Bruce D."/>
            <person name="Han C."/>
            <person name="Tapia R."/>
            <person name="Gilna P."/>
            <person name="Kiss H."/>
            <person name="Schmutz J."/>
            <person name="Larimer F."/>
            <person name="Land M."/>
            <person name="Kyrpides N."/>
            <person name="Ivanova N."/>
            <person name="Richardson P."/>
        </authorList>
    </citation>
    <scope>NUCLEOTIDE SEQUENCE [LARGE SCALE GENOMIC DNA]</scope>
    <source>
        <strain>ATCC BAA-621 / DSM 15236 / T118</strain>
    </source>
</reference>
<sequence length="94" mass="10293">MIRDVLVGIVKGYRLLLSPWLGSSCRFEPTCSAYSLQALQTHGAAAGSYLTLTRLARCHPWCAGGSDPVPSEKPRFKSQLFTQLIHPSSEKKSS</sequence>
<name>YIDD_ALBFT</name>